<keyword id="KW-0067">ATP-binding</keyword>
<keyword id="KW-0963">Cytoplasm</keyword>
<keyword id="KW-0210">Decarboxylase</keyword>
<keyword id="KW-0312">Gluconeogenesis</keyword>
<keyword id="KW-0456">Lyase</keyword>
<keyword id="KW-0464">Manganese</keyword>
<keyword id="KW-0479">Metal-binding</keyword>
<keyword id="KW-0547">Nucleotide-binding</keyword>
<comment type="function">
    <text evidence="1">Involved in the gluconeogenesis. Catalyzes the conversion of oxaloacetate (OAA) to phosphoenolpyruvate (PEP) through direct phosphoryl transfer between the nucleoside triphosphate and OAA.</text>
</comment>
<comment type="catalytic activity">
    <reaction evidence="1">
        <text>oxaloacetate + ATP = phosphoenolpyruvate + ADP + CO2</text>
        <dbReference type="Rhea" id="RHEA:18617"/>
        <dbReference type="ChEBI" id="CHEBI:16452"/>
        <dbReference type="ChEBI" id="CHEBI:16526"/>
        <dbReference type="ChEBI" id="CHEBI:30616"/>
        <dbReference type="ChEBI" id="CHEBI:58702"/>
        <dbReference type="ChEBI" id="CHEBI:456216"/>
        <dbReference type="EC" id="4.1.1.49"/>
    </reaction>
</comment>
<comment type="cofactor">
    <cofactor evidence="1">
        <name>Mn(2+)</name>
        <dbReference type="ChEBI" id="CHEBI:29035"/>
    </cofactor>
    <text evidence="1">Binds 1 Mn(2+) ion per subunit.</text>
</comment>
<comment type="pathway">
    <text evidence="1">Carbohydrate biosynthesis; gluconeogenesis.</text>
</comment>
<comment type="subunit">
    <text evidence="1">Monomer.</text>
</comment>
<comment type="subcellular location">
    <subcellularLocation>
        <location evidence="1">Cytoplasm</location>
    </subcellularLocation>
</comment>
<comment type="similarity">
    <text evidence="1">Belongs to the phosphoenolpyruvate carboxykinase (ATP) family.</text>
</comment>
<protein>
    <recommendedName>
        <fullName evidence="1">Phosphoenolpyruvate carboxykinase (ATP)</fullName>
        <shortName evidence="1">PCK</shortName>
        <shortName evidence="1">PEP carboxykinase</shortName>
        <shortName evidence="1">PEPCK</shortName>
        <ecNumber evidence="1">4.1.1.49</ecNumber>
    </recommendedName>
</protein>
<proteinExistence type="inferred from homology"/>
<organism>
    <name type="scientific">Shewanella baltica (strain OS195)</name>
    <dbReference type="NCBI Taxonomy" id="399599"/>
    <lineage>
        <taxon>Bacteria</taxon>
        <taxon>Pseudomonadati</taxon>
        <taxon>Pseudomonadota</taxon>
        <taxon>Gammaproteobacteria</taxon>
        <taxon>Alteromonadales</taxon>
        <taxon>Shewanellaceae</taxon>
        <taxon>Shewanella</taxon>
    </lineage>
</organism>
<dbReference type="EC" id="4.1.1.49" evidence="1"/>
<dbReference type="EMBL" id="CP000891">
    <property type="protein sequence ID" value="ABX47331.1"/>
    <property type="molecule type" value="Genomic_DNA"/>
</dbReference>
<dbReference type="RefSeq" id="WP_006084924.1">
    <property type="nucleotide sequence ID" value="NC_009997.1"/>
</dbReference>
<dbReference type="SMR" id="A9KVC7"/>
<dbReference type="KEGG" id="sbn:Sbal195_0149"/>
<dbReference type="HOGENOM" id="CLU_018247_0_1_6"/>
<dbReference type="UniPathway" id="UPA00138"/>
<dbReference type="Proteomes" id="UP000000770">
    <property type="component" value="Chromosome"/>
</dbReference>
<dbReference type="GO" id="GO:0005829">
    <property type="term" value="C:cytosol"/>
    <property type="evidence" value="ECO:0007669"/>
    <property type="project" value="TreeGrafter"/>
</dbReference>
<dbReference type="GO" id="GO:0005524">
    <property type="term" value="F:ATP binding"/>
    <property type="evidence" value="ECO:0007669"/>
    <property type="project" value="UniProtKB-UniRule"/>
</dbReference>
<dbReference type="GO" id="GO:0046872">
    <property type="term" value="F:metal ion binding"/>
    <property type="evidence" value="ECO:0007669"/>
    <property type="project" value="UniProtKB-KW"/>
</dbReference>
<dbReference type="GO" id="GO:0004612">
    <property type="term" value="F:phosphoenolpyruvate carboxykinase (ATP) activity"/>
    <property type="evidence" value="ECO:0007669"/>
    <property type="project" value="UniProtKB-UniRule"/>
</dbReference>
<dbReference type="GO" id="GO:0006094">
    <property type="term" value="P:gluconeogenesis"/>
    <property type="evidence" value="ECO:0007669"/>
    <property type="project" value="UniProtKB-UniRule"/>
</dbReference>
<dbReference type="CDD" id="cd00484">
    <property type="entry name" value="PEPCK_ATP"/>
    <property type="match status" value="1"/>
</dbReference>
<dbReference type="FunFam" id="2.170.8.10:FF:000001">
    <property type="entry name" value="Phosphoenolpyruvate carboxykinase (ATP)"/>
    <property type="match status" value="1"/>
</dbReference>
<dbReference type="Gene3D" id="3.90.228.20">
    <property type="match status" value="1"/>
</dbReference>
<dbReference type="Gene3D" id="3.40.449.10">
    <property type="entry name" value="Phosphoenolpyruvate Carboxykinase, domain 1"/>
    <property type="match status" value="1"/>
</dbReference>
<dbReference type="Gene3D" id="2.170.8.10">
    <property type="entry name" value="Phosphoenolpyruvate Carboxykinase, domain 2"/>
    <property type="match status" value="1"/>
</dbReference>
<dbReference type="HAMAP" id="MF_00453">
    <property type="entry name" value="PEPCK_ATP"/>
    <property type="match status" value="1"/>
</dbReference>
<dbReference type="InterPro" id="IPR001272">
    <property type="entry name" value="PEP_carboxykinase_ATP"/>
</dbReference>
<dbReference type="InterPro" id="IPR013035">
    <property type="entry name" value="PEP_carboxykinase_C"/>
</dbReference>
<dbReference type="InterPro" id="IPR008210">
    <property type="entry name" value="PEP_carboxykinase_N"/>
</dbReference>
<dbReference type="InterPro" id="IPR015994">
    <property type="entry name" value="PEPCK_ATP_CS"/>
</dbReference>
<dbReference type="NCBIfam" id="TIGR00224">
    <property type="entry name" value="pckA"/>
    <property type="match status" value="1"/>
</dbReference>
<dbReference type="NCBIfam" id="NF006820">
    <property type="entry name" value="PRK09344.1-2"/>
    <property type="match status" value="1"/>
</dbReference>
<dbReference type="NCBIfam" id="NF006821">
    <property type="entry name" value="PRK09344.1-3"/>
    <property type="match status" value="1"/>
</dbReference>
<dbReference type="NCBIfam" id="NF006823">
    <property type="entry name" value="PRK09344.1-5"/>
    <property type="match status" value="1"/>
</dbReference>
<dbReference type="PANTHER" id="PTHR30031:SF0">
    <property type="entry name" value="PHOSPHOENOLPYRUVATE CARBOXYKINASE (ATP)"/>
    <property type="match status" value="1"/>
</dbReference>
<dbReference type="PANTHER" id="PTHR30031">
    <property type="entry name" value="PHOSPHOENOLPYRUVATE CARBOXYKINASE ATP"/>
    <property type="match status" value="1"/>
</dbReference>
<dbReference type="Pfam" id="PF01293">
    <property type="entry name" value="PEPCK_ATP"/>
    <property type="match status" value="1"/>
</dbReference>
<dbReference type="PIRSF" id="PIRSF006294">
    <property type="entry name" value="PEP_crbxkin"/>
    <property type="match status" value="1"/>
</dbReference>
<dbReference type="SUPFAM" id="SSF68923">
    <property type="entry name" value="PEP carboxykinase N-terminal domain"/>
    <property type="match status" value="1"/>
</dbReference>
<dbReference type="SUPFAM" id="SSF53795">
    <property type="entry name" value="PEP carboxykinase-like"/>
    <property type="match status" value="1"/>
</dbReference>
<dbReference type="PROSITE" id="PS00532">
    <property type="entry name" value="PEPCK_ATP"/>
    <property type="match status" value="1"/>
</dbReference>
<gene>
    <name evidence="1" type="primary">pckA</name>
    <name type="ordered locus">Sbal195_0149</name>
</gene>
<reference key="1">
    <citation type="submission" date="2007-11" db="EMBL/GenBank/DDBJ databases">
        <title>Complete sequence of chromosome of Shewanella baltica OS195.</title>
        <authorList>
            <consortium name="US DOE Joint Genome Institute"/>
            <person name="Copeland A."/>
            <person name="Lucas S."/>
            <person name="Lapidus A."/>
            <person name="Barry K."/>
            <person name="Glavina del Rio T."/>
            <person name="Dalin E."/>
            <person name="Tice H."/>
            <person name="Pitluck S."/>
            <person name="Chain P."/>
            <person name="Malfatti S."/>
            <person name="Shin M."/>
            <person name="Vergez L."/>
            <person name="Schmutz J."/>
            <person name="Larimer F."/>
            <person name="Land M."/>
            <person name="Hauser L."/>
            <person name="Kyrpides N."/>
            <person name="Kim E."/>
            <person name="Brettar I."/>
            <person name="Rodrigues J."/>
            <person name="Konstantinidis K."/>
            <person name="Klappenbach J."/>
            <person name="Hofle M."/>
            <person name="Tiedje J."/>
            <person name="Richardson P."/>
        </authorList>
    </citation>
    <scope>NUCLEOTIDE SEQUENCE [LARGE SCALE GENOMIC DNA]</scope>
    <source>
        <strain>OS195</strain>
    </source>
</reference>
<feature type="chain" id="PRO_1000081001" description="Phosphoenolpyruvate carboxykinase (ATP)">
    <location>
        <begin position="1"/>
        <end position="513"/>
    </location>
</feature>
<feature type="binding site" evidence="1">
    <location>
        <position position="45"/>
    </location>
    <ligand>
        <name>substrate</name>
    </ligand>
</feature>
<feature type="binding site" evidence="1">
    <location>
        <position position="179"/>
    </location>
    <ligand>
        <name>substrate</name>
    </ligand>
</feature>
<feature type="binding site" evidence="1">
    <location>
        <position position="185"/>
    </location>
    <ligand>
        <name>ATP</name>
        <dbReference type="ChEBI" id="CHEBI:30616"/>
    </ligand>
</feature>
<feature type="binding site" evidence="1">
    <location>
        <position position="185"/>
    </location>
    <ligand>
        <name>Mn(2+)</name>
        <dbReference type="ChEBI" id="CHEBI:29035"/>
    </ligand>
</feature>
<feature type="binding site" evidence="1">
    <location>
        <position position="185"/>
    </location>
    <ligand>
        <name>substrate</name>
    </ligand>
</feature>
<feature type="binding site" evidence="1">
    <location>
        <position position="204"/>
    </location>
    <ligand>
        <name>ATP</name>
        <dbReference type="ChEBI" id="CHEBI:30616"/>
    </ligand>
</feature>
<feature type="binding site" evidence="1">
    <location>
        <position position="204"/>
    </location>
    <ligand>
        <name>Mn(2+)</name>
        <dbReference type="ChEBI" id="CHEBI:29035"/>
    </ligand>
</feature>
<feature type="binding site" evidence="1">
    <location>
        <begin position="220"/>
        <end position="228"/>
    </location>
    <ligand>
        <name>ATP</name>
        <dbReference type="ChEBI" id="CHEBI:30616"/>
    </ligand>
</feature>
<feature type="binding site" evidence="1">
    <location>
        <position position="241"/>
    </location>
    <ligand>
        <name>Mn(2+)</name>
        <dbReference type="ChEBI" id="CHEBI:29035"/>
    </ligand>
</feature>
<feature type="binding site" evidence="1">
    <location>
        <position position="269"/>
    </location>
    <ligand>
        <name>ATP</name>
        <dbReference type="ChEBI" id="CHEBI:30616"/>
    </ligand>
</feature>
<feature type="binding site" evidence="1">
    <location>
        <position position="305"/>
    </location>
    <ligand>
        <name>ATP</name>
        <dbReference type="ChEBI" id="CHEBI:30616"/>
    </ligand>
</feature>
<feature type="binding site" evidence="1">
    <location>
        <position position="305"/>
    </location>
    <ligand>
        <name>substrate</name>
    </ligand>
</feature>
<feature type="binding site" evidence="1">
    <location>
        <position position="431"/>
    </location>
    <ligand>
        <name>ATP</name>
        <dbReference type="ChEBI" id="CHEBI:30616"/>
    </ligand>
</feature>
<name>PCKA_SHEB9</name>
<accession>A9KVC7</accession>
<evidence type="ECO:0000255" key="1">
    <source>
        <dbReference type="HAMAP-Rule" id="MF_00453"/>
    </source>
</evidence>
<sequence>MADGLNRVHFNPSTAQLVEFALLRGEGELTANGALVAKTGARSGRSPGDRFIVREPSSEAEIEWGPVNQAFDPGAFEGLWARVEAYLADKELFVSDLEVGADTEHYQPVRVTTQYAWHQLFARNLFIIPEEFNRKDKPVWQIINAPDFVCDPERDGTNSDATVILNFAERKVLLAGLKYAGEMKKSMFSVQNFLLPAQGVLPMHCSANVGKDGDTTLFFGLSGTGKTTLSADPKRFLIGDDEHGWAPGGVFNIEGGCYAKCIDLSQKNEPVIWDAIRFGTVLENVVMDEHRVPNYKDSSLTENTRAAYPLEHIAQRKEDNCGAEPHAVVFLTCDVSGVLPPVSILTKEQAAYHFLSGYTAKVGSTEIGSTSAIQSTFSTCFGAPFFPRPAGVYAELLMKRIESFGSQVYLVNTGWTGGPHGVGKRFDIPTTRAIVDAIVSGELKDVETVHLDTLNLAVPVAVSGVDSNLLNPINTWGDKALYAEYAQKLAEAFTKNFAKYQVSDAIRNAGPKA</sequence>